<feature type="chain" id="PRO_0000232238" description="ATP-dependent RNA helicase mak-5">
    <location>
        <begin position="1"/>
        <end position="805"/>
    </location>
</feature>
<feature type="domain" description="Helicase ATP-binding" evidence="2">
    <location>
        <begin position="240"/>
        <end position="463"/>
    </location>
</feature>
<feature type="domain" description="Helicase C-terminal" evidence="3">
    <location>
        <begin position="510"/>
        <end position="666"/>
    </location>
</feature>
<feature type="region of interest" description="Disordered" evidence="4">
    <location>
        <begin position="1"/>
        <end position="33"/>
    </location>
</feature>
<feature type="region of interest" description="Disordered" evidence="4">
    <location>
        <begin position="79"/>
        <end position="189"/>
    </location>
</feature>
<feature type="region of interest" description="Disordered" evidence="4">
    <location>
        <begin position="390"/>
        <end position="435"/>
    </location>
</feature>
<feature type="region of interest" description="Disordered" evidence="4">
    <location>
        <begin position="729"/>
        <end position="751"/>
    </location>
</feature>
<feature type="short sequence motif" description="Q motif">
    <location>
        <begin position="209"/>
        <end position="237"/>
    </location>
</feature>
<feature type="short sequence motif" description="DEAD box">
    <location>
        <begin position="372"/>
        <end position="375"/>
    </location>
</feature>
<feature type="compositionally biased region" description="Basic residues" evidence="4">
    <location>
        <begin position="1"/>
        <end position="10"/>
    </location>
</feature>
<feature type="compositionally biased region" description="Acidic residues" evidence="4">
    <location>
        <begin position="85"/>
        <end position="100"/>
    </location>
</feature>
<feature type="compositionally biased region" description="Basic and acidic residues" evidence="4">
    <location>
        <begin position="110"/>
        <end position="119"/>
    </location>
</feature>
<feature type="compositionally biased region" description="Basic and acidic residues" evidence="4">
    <location>
        <begin position="126"/>
        <end position="143"/>
    </location>
</feature>
<feature type="compositionally biased region" description="Basic and acidic residues" evidence="4">
    <location>
        <begin position="164"/>
        <end position="189"/>
    </location>
</feature>
<feature type="compositionally biased region" description="Basic and acidic residues" evidence="4">
    <location>
        <begin position="390"/>
        <end position="406"/>
    </location>
</feature>
<feature type="compositionally biased region" description="Acidic residues" evidence="4">
    <location>
        <begin position="410"/>
        <end position="431"/>
    </location>
</feature>
<feature type="binding site" evidence="2">
    <location>
        <begin position="253"/>
        <end position="260"/>
    </location>
    <ligand>
        <name>ATP</name>
        <dbReference type="ChEBI" id="CHEBI:30616"/>
    </ligand>
</feature>
<comment type="function">
    <text evidence="1">ATP-binding RNA helicase involved in the biogenesis of 60S ribosomal subunits and is required for the normal formation of 25S and 5.8S rRNAs.</text>
</comment>
<comment type="catalytic activity">
    <reaction>
        <text>ATP + H2O = ADP + phosphate + H(+)</text>
        <dbReference type="Rhea" id="RHEA:13065"/>
        <dbReference type="ChEBI" id="CHEBI:15377"/>
        <dbReference type="ChEBI" id="CHEBI:15378"/>
        <dbReference type="ChEBI" id="CHEBI:30616"/>
        <dbReference type="ChEBI" id="CHEBI:43474"/>
        <dbReference type="ChEBI" id="CHEBI:456216"/>
        <dbReference type="EC" id="3.6.4.13"/>
    </reaction>
</comment>
<comment type="subcellular location">
    <subcellularLocation>
        <location evidence="1">Nucleus</location>
        <location evidence="1">Nucleolus</location>
    </subcellularLocation>
</comment>
<comment type="domain">
    <text>The Q motif is unique to and characteristic of the DEAD box family of RNA helicases and controls ATP binding and hydrolysis.</text>
</comment>
<comment type="similarity">
    <text evidence="5">Belongs to the DEAD box helicase family. DDX24/MAK5 subfamily.</text>
</comment>
<proteinExistence type="inferred from homology"/>
<accession>Q7RZH4</accession>
<organism>
    <name type="scientific">Neurospora crassa (strain ATCC 24698 / 74-OR23-1A / CBS 708.71 / DSM 1257 / FGSC 987)</name>
    <dbReference type="NCBI Taxonomy" id="367110"/>
    <lineage>
        <taxon>Eukaryota</taxon>
        <taxon>Fungi</taxon>
        <taxon>Dikarya</taxon>
        <taxon>Ascomycota</taxon>
        <taxon>Pezizomycotina</taxon>
        <taxon>Sordariomycetes</taxon>
        <taxon>Sordariomycetidae</taxon>
        <taxon>Sordariales</taxon>
        <taxon>Sordariaceae</taxon>
        <taxon>Neurospora</taxon>
    </lineage>
</organism>
<gene>
    <name type="primary">mak-5</name>
    <name type="ORF">B10H18.180</name>
    <name type="ORF">NCU04041</name>
</gene>
<evidence type="ECO:0000250" key="1"/>
<evidence type="ECO:0000255" key="2">
    <source>
        <dbReference type="PROSITE-ProRule" id="PRU00541"/>
    </source>
</evidence>
<evidence type="ECO:0000255" key="3">
    <source>
        <dbReference type="PROSITE-ProRule" id="PRU00542"/>
    </source>
</evidence>
<evidence type="ECO:0000256" key="4">
    <source>
        <dbReference type="SAM" id="MobiDB-lite"/>
    </source>
</evidence>
<evidence type="ECO:0000305" key="5"/>
<protein>
    <recommendedName>
        <fullName>ATP-dependent RNA helicase mak-5</fullName>
        <ecNumber>3.6.4.13</ecNumber>
    </recommendedName>
</protein>
<keyword id="KW-0067">ATP-binding</keyword>
<keyword id="KW-0347">Helicase</keyword>
<keyword id="KW-0378">Hydrolase</keyword>
<keyword id="KW-0547">Nucleotide-binding</keyword>
<keyword id="KW-0539">Nucleus</keyword>
<keyword id="KW-1185">Reference proteome</keyword>
<keyword id="KW-0690">Ribosome biogenesis</keyword>
<keyword id="KW-0694">RNA-binding</keyword>
<keyword id="KW-0698">rRNA processing</keyword>
<reference key="1">
    <citation type="journal article" date="2003" name="Nucleic Acids Res.">
        <title>What's in the genome of a filamentous fungus? Analysis of the Neurospora genome sequence.</title>
        <authorList>
            <person name="Mannhaupt G."/>
            <person name="Montrone C."/>
            <person name="Haase D."/>
            <person name="Mewes H.-W."/>
            <person name="Aign V."/>
            <person name="Hoheisel J.D."/>
            <person name="Fartmann B."/>
            <person name="Nyakatura G."/>
            <person name="Kempken F."/>
            <person name="Maier J."/>
            <person name="Schulte U."/>
        </authorList>
    </citation>
    <scope>NUCLEOTIDE SEQUENCE [LARGE SCALE GENOMIC DNA]</scope>
    <source>
        <strain>ATCC 24698 / 74-OR23-1A / CBS 708.71 / DSM 1257 / FGSC 987</strain>
    </source>
</reference>
<reference key="2">
    <citation type="journal article" date="2003" name="Nature">
        <title>The genome sequence of the filamentous fungus Neurospora crassa.</title>
        <authorList>
            <person name="Galagan J.E."/>
            <person name="Calvo S.E."/>
            <person name="Borkovich K.A."/>
            <person name="Selker E.U."/>
            <person name="Read N.D."/>
            <person name="Jaffe D.B."/>
            <person name="FitzHugh W."/>
            <person name="Ma L.-J."/>
            <person name="Smirnov S."/>
            <person name="Purcell S."/>
            <person name="Rehman B."/>
            <person name="Elkins T."/>
            <person name="Engels R."/>
            <person name="Wang S."/>
            <person name="Nielsen C.B."/>
            <person name="Butler J."/>
            <person name="Endrizzi M."/>
            <person name="Qui D."/>
            <person name="Ianakiev P."/>
            <person name="Bell-Pedersen D."/>
            <person name="Nelson M.A."/>
            <person name="Werner-Washburne M."/>
            <person name="Selitrennikoff C.P."/>
            <person name="Kinsey J.A."/>
            <person name="Braun E.L."/>
            <person name="Zelter A."/>
            <person name="Schulte U."/>
            <person name="Kothe G.O."/>
            <person name="Jedd G."/>
            <person name="Mewes H.-W."/>
            <person name="Staben C."/>
            <person name="Marcotte E."/>
            <person name="Greenberg D."/>
            <person name="Roy A."/>
            <person name="Foley K."/>
            <person name="Naylor J."/>
            <person name="Stange-Thomann N."/>
            <person name="Barrett R."/>
            <person name="Gnerre S."/>
            <person name="Kamal M."/>
            <person name="Kamvysselis M."/>
            <person name="Mauceli E.W."/>
            <person name="Bielke C."/>
            <person name="Rudd S."/>
            <person name="Frishman D."/>
            <person name="Krystofova S."/>
            <person name="Rasmussen C."/>
            <person name="Metzenberg R.L."/>
            <person name="Perkins D.D."/>
            <person name="Kroken S."/>
            <person name="Cogoni C."/>
            <person name="Macino G."/>
            <person name="Catcheside D.E.A."/>
            <person name="Li W."/>
            <person name="Pratt R.J."/>
            <person name="Osmani S.A."/>
            <person name="DeSouza C.P.C."/>
            <person name="Glass N.L."/>
            <person name="Orbach M.J."/>
            <person name="Berglund J.A."/>
            <person name="Voelker R."/>
            <person name="Yarden O."/>
            <person name="Plamann M."/>
            <person name="Seiler S."/>
            <person name="Dunlap J.C."/>
            <person name="Radford A."/>
            <person name="Aramayo R."/>
            <person name="Natvig D.O."/>
            <person name="Alex L.A."/>
            <person name="Mannhaupt G."/>
            <person name="Ebbole D.J."/>
            <person name="Freitag M."/>
            <person name="Paulsen I."/>
            <person name="Sachs M.S."/>
            <person name="Lander E.S."/>
            <person name="Nusbaum C."/>
            <person name="Birren B.W."/>
        </authorList>
    </citation>
    <scope>NUCLEOTIDE SEQUENCE [LARGE SCALE GENOMIC DNA]</scope>
    <source>
        <strain>ATCC 24698 / 74-OR23-1A / CBS 708.71 / DSM 1257 / FGSC 987</strain>
    </source>
</reference>
<dbReference type="EC" id="3.6.4.13"/>
<dbReference type="EMBL" id="BX897678">
    <property type="protein sequence ID" value="CAE85602.1"/>
    <property type="molecule type" value="Genomic_DNA"/>
</dbReference>
<dbReference type="EMBL" id="CM002241">
    <property type="protein sequence ID" value="EAA28420.1"/>
    <property type="molecule type" value="Genomic_DNA"/>
</dbReference>
<dbReference type="RefSeq" id="XP_957656.1">
    <property type="nucleotide sequence ID" value="XM_952563.2"/>
</dbReference>
<dbReference type="SMR" id="Q7RZH4"/>
<dbReference type="FunCoup" id="Q7RZH4">
    <property type="interactions" value="906"/>
</dbReference>
<dbReference type="STRING" id="367110.Q7RZH4"/>
<dbReference type="PaxDb" id="5141-EFNCRP00000003590"/>
<dbReference type="EnsemblFungi" id="EAA28420">
    <property type="protein sequence ID" value="EAA28420"/>
    <property type="gene ID" value="NCU04041"/>
</dbReference>
<dbReference type="GeneID" id="3873827"/>
<dbReference type="KEGG" id="ncr:NCU04041"/>
<dbReference type="VEuPathDB" id="FungiDB:NCU04041"/>
<dbReference type="HOGENOM" id="CLU_003041_13_0_1"/>
<dbReference type="InParanoid" id="Q7RZH4"/>
<dbReference type="OMA" id="QMIQKAR"/>
<dbReference type="OrthoDB" id="4310724at2759"/>
<dbReference type="Proteomes" id="UP000001805">
    <property type="component" value="Chromosome 5, Linkage Group VI"/>
</dbReference>
<dbReference type="GO" id="GO:0005730">
    <property type="term" value="C:nucleolus"/>
    <property type="evidence" value="ECO:0000318"/>
    <property type="project" value="GO_Central"/>
</dbReference>
<dbReference type="GO" id="GO:0005524">
    <property type="term" value="F:ATP binding"/>
    <property type="evidence" value="ECO:0007669"/>
    <property type="project" value="UniProtKB-KW"/>
</dbReference>
<dbReference type="GO" id="GO:0016887">
    <property type="term" value="F:ATP hydrolysis activity"/>
    <property type="evidence" value="ECO:0007669"/>
    <property type="project" value="RHEA"/>
</dbReference>
<dbReference type="GO" id="GO:0003723">
    <property type="term" value="F:RNA binding"/>
    <property type="evidence" value="ECO:0007669"/>
    <property type="project" value="UniProtKB-KW"/>
</dbReference>
<dbReference type="GO" id="GO:0003724">
    <property type="term" value="F:RNA helicase activity"/>
    <property type="evidence" value="ECO:0007669"/>
    <property type="project" value="UniProtKB-EC"/>
</dbReference>
<dbReference type="GO" id="GO:0006364">
    <property type="term" value="P:rRNA processing"/>
    <property type="evidence" value="ECO:0007669"/>
    <property type="project" value="UniProtKB-KW"/>
</dbReference>
<dbReference type="CDD" id="cd17946">
    <property type="entry name" value="DEADc_DDX24"/>
    <property type="match status" value="1"/>
</dbReference>
<dbReference type="CDD" id="cd18787">
    <property type="entry name" value="SF2_C_DEAD"/>
    <property type="match status" value="1"/>
</dbReference>
<dbReference type="Gene3D" id="3.40.50.300">
    <property type="entry name" value="P-loop containing nucleotide triphosphate hydrolases"/>
    <property type="match status" value="2"/>
</dbReference>
<dbReference type="InterPro" id="IPR011545">
    <property type="entry name" value="DEAD/DEAH_box_helicase_dom"/>
</dbReference>
<dbReference type="InterPro" id="IPR014001">
    <property type="entry name" value="Helicase_ATP-bd"/>
</dbReference>
<dbReference type="InterPro" id="IPR001650">
    <property type="entry name" value="Helicase_C-like"/>
</dbReference>
<dbReference type="InterPro" id="IPR027417">
    <property type="entry name" value="P-loop_NTPase"/>
</dbReference>
<dbReference type="InterPro" id="IPR000629">
    <property type="entry name" value="RNA-helicase_DEAD-box_CS"/>
</dbReference>
<dbReference type="InterPro" id="IPR014014">
    <property type="entry name" value="RNA_helicase_DEAD_Q_motif"/>
</dbReference>
<dbReference type="PANTHER" id="PTHR24031">
    <property type="entry name" value="RNA HELICASE"/>
    <property type="match status" value="1"/>
</dbReference>
<dbReference type="Pfam" id="PF00270">
    <property type="entry name" value="DEAD"/>
    <property type="match status" value="1"/>
</dbReference>
<dbReference type="Pfam" id="PF00271">
    <property type="entry name" value="Helicase_C"/>
    <property type="match status" value="1"/>
</dbReference>
<dbReference type="SMART" id="SM00487">
    <property type="entry name" value="DEXDc"/>
    <property type="match status" value="1"/>
</dbReference>
<dbReference type="SMART" id="SM00490">
    <property type="entry name" value="HELICc"/>
    <property type="match status" value="1"/>
</dbReference>
<dbReference type="SUPFAM" id="SSF52540">
    <property type="entry name" value="P-loop containing nucleoside triphosphate hydrolases"/>
    <property type="match status" value="1"/>
</dbReference>
<dbReference type="PROSITE" id="PS00039">
    <property type="entry name" value="DEAD_ATP_HELICASE"/>
    <property type="match status" value="1"/>
</dbReference>
<dbReference type="PROSITE" id="PS51192">
    <property type="entry name" value="HELICASE_ATP_BIND_1"/>
    <property type="match status" value="1"/>
</dbReference>
<dbReference type="PROSITE" id="PS51194">
    <property type="entry name" value="HELICASE_CTER"/>
    <property type="match status" value="1"/>
</dbReference>
<dbReference type="PROSITE" id="PS51195">
    <property type="entry name" value="Q_MOTIF"/>
    <property type="match status" value="1"/>
</dbReference>
<name>MAK5_NEUCR</name>
<sequence length="805" mass="89254">MAVDKKRKNTKAPASGPKRRKTQPSSKQIKRPVSVDALAWKTVDIPEMFDDAEGFFGLEEITGVDIVKDGDVVKFMAAVPKSEAEVEDDGEEFGGFDDEETPKPAGNADQEVKTSETKAEAASTPAKEKKASKDQRKPKEQQKQQKQQKQQPKKEQPNKAANKKNAEDKKKARKNEKTTVEPKDPELETDLFTKLEELPEPEEEEIDMSEWVPLDLSPRMISSIAKLRFSKPTVIQSKAIPEIMAGHDVIGKASTGSGKTLAFGIPVIESWLSAAETRKQNKEERKGATALILSPTRELAQQIRDHLQALCKGLPTAPYICSVLGGMAVQKQKRQLQVADIVIATPGRMWEVMSSDNSVLASLRNISFLVLDEADRLLKDGHFKEAEEIFKALDRPPVEENNEDQKMGGTDEEGQEEEEEDSEEEEEEEEEHVNKRQTLIFSATFNKNLQQKLAGKSKFKATSTQDMEYLLQKLNFRETPKFVDANPVHQMAENLKEGLIMCGDMEKDLYLYATLMLQPTRRALVFTNSVNSVRRLTPLLENLNLPAFPLHSGMIQQARLRSIDRFKANEGAKKKNGSAAILVATDVAARGLDIPDVDLVIHYHVPRAAEDYVHRSGRTARASNSGTSILLCGPKEAVPTQRLVAKVHAQAEVKAGNSGNNTKKLVSSGLRTIDIDRRIVAKLRERVDLAKKIADAVQAKTMGGKEDDWMKKAAEDLGVDYDSEELEKAGKWGGKGSSKKQKQKEAQQMSKGELASLRAALRDLLSKRINTGVSERYLTGLDVSELLKGEQGLFLGQVDGLGLDD</sequence>